<gene>
    <name type="primary">FOXP2</name>
    <name type="synonym">CAGH44</name>
    <name type="synonym">TNRC10</name>
</gene>
<sequence>MMQESATETISNSSMNQNGMSTLSSQLDAGSRDGRSSGDTSSEVSTVELLHLQQQQALQAARQLLLQQQTSGLKSPKSSDKQRPLQVPVSVAMMTPQVITPQQMQQILQQQVLSPQQLQALLQQQQAVMLQQQQLQEFYKKQQEQLHLQLLQQQQQQQQQQQQQQQQQQQQQQQQQQQQQQQQQQQQQQQQHPGKQAKEQQQQQQQQQQLAAQQLVFQQQLLQMQQLQQQQHLLSLQRQGLISIPPGQAALPVQSLPQAGLSPAEIQQLWKEVTGVHSMEDNGIKHGGLDLTTNNSSSTTSSNTSKASPPITHHSIVNGQSSVLSARRDSSSHEETGASHTLYGHGVCKWPGCESICEDFGQFLKHLNNEHALDDRSTAQCRVQMQVVQQLEIQLSKERERLQAMMTHLHMRPSEPKPSPKPLNLVSSVTMSKNMLETSPQSLPQTPTTPTAPVTPITQGPSVITPASVPNVGAIRRRHSDKYNIPMSSEIAPNYEFYKNADVRPPFTYATLIRQAIMESSDRQLTLNEIYSWFTRTFAYFRRNAATWKNAVRHNLSLHKCFVRVENVKGAVWTVDEVEYQKRRSQKITGSPTLVKNIPTSLGYGAALNASLQAALAESSLPLLSNPGLINNASSGLLQAVHEDLNGSLDHIDSNGNSSPGCSPQPHIHSIHVKEEPVIAEDEDCPMSLVTTANHSPELEDDREIEEEPLSEDLE</sequence>
<name>FOXP2_HUMAN</name>
<proteinExistence type="evidence at protein level"/>
<reference key="1">
    <citation type="journal article" date="2001" name="Nature">
        <title>A forkhead-domain gene is mutated in a severe speech and language disorder.</title>
        <authorList>
            <person name="Lai C.S.L."/>
            <person name="Fisher S.E."/>
            <person name="Hurst J.A."/>
            <person name="Vargha-Khadem F."/>
            <person name="Monaco A.P."/>
        </authorList>
    </citation>
    <scope>NUCLEOTIDE SEQUENCE [MRNA] (ISOFORM 1)</scope>
    <scope>ALTERNATIVE SPLICING</scope>
    <scope>VARIANT SPCH1 HIS-553</scope>
</reference>
<reference key="2">
    <citation type="journal article" date="2002" name="Hum. Genet.">
        <title>FOXP2: novel exons, splice variants, and CAG repeat length stability.</title>
        <authorList>
            <person name="Bruce H.A."/>
            <person name="Margolis R.L."/>
        </authorList>
    </citation>
    <scope>NUCLEOTIDE SEQUENCE [MRNA] (ISOFORM 7)</scope>
    <scope>NUCLEOTIDE SEQUENCE [MRNA] OF 1-415 (ISOFORM 1)</scope>
    <scope>NUCLEOTIDE SEQUENCE [MRNA] OF 259-715 (ISOFORM 6)</scope>
    <scope>TISSUE SPECIFICITY</scope>
    <source>
        <tissue>Brain</tissue>
        <tissue>Corpus striatum</tissue>
        <tissue>Fetal brain</tissue>
        <tissue>Frontal cortex</tissue>
    </source>
</reference>
<reference key="3">
    <citation type="submission" date="2002-03" db="EMBL/GenBank/DDBJ databases">
        <authorList>
            <person name="Vincent J.B."/>
            <person name="Scherer S.W."/>
        </authorList>
    </citation>
    <scope>NUCLEOTIDE SEQUENCE [MRNA] (ISOFORM 5)</scope>
</reference>
<reference key="4">
    <citation type="submission" date="2002-08" db="EMBL/GenBank/DDBJ databases">
        <authorList>
            <person name="Guo J.H."/>
            <person name="Chen L."/>
            <person name="Yu L."/>
        </authorList>
    </citation>
    <scope>NUCLEOTIDE SEQUENCE [LARGE SCALE MRNA] (ISOFORM 4)</scope>
    <source>
        <tissue>Brain</tissue>
    </source>
</reference>
<reference key="5">
    <citation type="journal article" date="2004" name="Nat. Genet.">
        <title>Complete sequencing and characterization of 21,243 full-length human cDNAs.</title>
        <authorList>
            <person name="Ota T."/>
            <person name="Suzuki Y."/>
            <person name="Nishikawa T."/>
            <person name="Otsuki T."/>
            <person name="Sugiyama T."/>
            <person name="Irie R."/>
            <person name="Wakamatsu A."/>
            <person name="Hayashi K."/>
            <person name="Sato H."/>
            <person name="Nagai K."/>
            <person name="Kimura K."/>
            <person name="Makita H."/>
            <person name="Sekine M."/>
            <person name="Obayashi M."/>
            <person name="Nishi T."/>
            <person name="Shibahara T."/>
            <person name="Tanaka T."/>
            <person name="Ishii S."/>
            <person name="Yamamoto J."/>
            <person name="Saito K."/>
            <person name="Kawai Y."/>
            <person name="Isono Y."/>
            <person name="Nakamura Y."/>
            <person name="Nagahari K."/>
            <person name="Murakami K."/>
            <person name="Yasuda T."/>
            <person name="Iwayanagi T."/>
            <person name="Wagatsuma M."/>
            <person name="Shiratori A."/>
            <person name="Sudo H."/>
            <person name="Hosoiri T."/>
            <person name="Kaku Y."/>
            <person name="Kodaira H."/>
            <person name="Kondo H."/>
            <person name="Sugawara M."/>
            <person name="Takahashi M."/>
            <person name="Kanda K."/>
            <person name="Yokoi T."/>
            <person name="Furuya T."/>
            <person name="Kikkawa E."/>
            <person name="Omura Y."/>
            <person name="Abe K."/>
            <person name="Kamihara K."/>
            <person name="Katsuta N."/>
            <person name="Sato K."/>
            <person name="Tanikawa M."/>
            <person name="Yamazaki M."/>
            <person name="Ninomiya K."/>
            <person name="Ishibashi T."/>
            <person name="Yamashita H."/>
            <person name="Murakawa K."/>
            <person name="Fujimori K."/>
            <person name="Tanai H."/>
            <person name="Kimata M."/>
            <person name="Watanabe M."/>
            <person name="Hiraoka S."/>
            <person name="Chiba Y."/>
            <person name="Ishida S."/>
            <person name="Ono Y."/>
            <person name="Takiguchi S."/>
            <person name="Watanabe S."/>
            <person name="Yosida M."/>
            <person name="Hotuta T."/>
            <person name="Kusano J."/>
            <person name="Kanehori K."/>
            <person name="Takahashi-Fujii A."/>
            <person name="Hara H."/>
            <person name="Tanase T.-O."/>
            <person name="Nomura Y."/>
            <person name="Togiya S."/>
            <person name="Komai F."/>
            <person name="Hara R."/>
            <person name="Takeuchi K."/>
            <person name="Arita M."/>
            <person name="Imose N."/>
            <person name="Musashino K."/>
            <person name="Yuuki H."/>
            <person name="Oshima A."/>
            <person name="Sasaki N."/>
            <person name="Aotsuka S."/>
            <person name="Yoshikawa Y."/>
            <person name="Matsunawa H."/>
            <person name="Ichihara T."/>
            <person name="Shiohata N."/>
            <person name="Sano S."/>
            <person name="Moriya S."/>
            <person name="Momiyama H."/>
            <person name="Satoh N."/>
            <person name="Takami S."/>
            <person name="Terashima Y."/>
            <person name="Suzuki O."/>
            <person name="Nakagawa S."/>
            <person name="Senoh A."/>
            <person name="Mizoguchi H."/>
            <person name="Goto Y."/>
            <person name="Shimizu F."/>
            <person name="Wakebe H."/>
            <person name="Hishigaki H."/>
            <person name="Watanabe T."/>
            <person name="Sugiyama A."/>
            <person name="Takemoto M."/>
            <person name="Kawakami B."/>
            <person name="Yamazaki M."/>
            <person name="Watanabe K."/>
            <person name="Kumagai A."/>
            <person name="Itakura S."/>
            <person name="Fukuzumi Y."/>
            <person name="Fujimori Y."/>
            <person name="Komiyama M."/>
            <person name="Tashiro H."/>
            <person name="Tanigami A."/>
            <person name="Fujiwara T."/>
            <person name="Ono T."/>
            <person name="Yamada K."/>
            <person name="Fujii Y."/>
            <person name="Ozaki K."/>
            <person name="Hirao M."/>
            <person name="Ohmori Y."/>
            <person name="Kawabata A."/>
            <person name="Hikiji T."/>
            <person name="Kobatake N."/>
            <person name="Inagaki H."/>
            <person name="Ikema Y."/>
            <person name="Okamoto S."/>
            <person name="Okitani R."/>
            <person name="Kawakami T."/>
            <person name="Noguchi S."/>
            <person name="Itoh T."/>
            <person name="Shigeta K."/>
            <person name="Senba T."/>
            <person name="Matsumura K."/>
            <person name="Nakajima Y."/>
            <person name="Mizuno T."/>
            <person name="Morinaga M."/>
            <person name="Sasaki M."/>
            <person name="Togashi T."/>
            <person name="Oyama M."/>
            <person name="Hata H."/>
            <person name="Watanabe M."/>
            <person name="Komatsu T."/>
            <person name="Mizushima-Sugano J."/>
            <person name="Satoh T."/>
            <person name="Shirai Y."/>
            <person name="Takahashi Y."/>
            <person name="Nakagawa K."/>
            <person name="Okumura K."/>
            <person name="Nagase T."/>
            <person name="Nomura N."/>
            <person name="Kikuchi H."/>
            <person name="Masuho Y."/>
            <person name="Yamashita R."/>
            <person name="Nakai K."/>
            <person name="Yada T."/>
            <person name="Nakamura Y."/>
            <person name="Ohara O."/>
            <person name="Isogai T."/>
            <person name="Sugano S."/>
        </authorList>
    </citation>
    <scope>NUCLEOTIDE SEQUENCE [LARGE SCALE MRNA] (ISOFORMS 8 AND 9)</scope>
    <source>
        <tissue>Tongue</tissue>
    </source>
</reference>
<reference key="6">
    <citation type="journal article" date="2003" name="Nature">
        <title>The DNA sequence of human chromosome 7.</title>
        <authorList>
            <person name="Hillier L.W."/>
            <person name="Fulton R.S."/>
            <person name="Fulton L.A."/>
            <person name="Graves T.A."/>
            <person name="Pepin K.H."/>
            <person name="Wagner-McPherson C."/>
            <person name="Layman D."/>
            <person name="Maas J."/>
            <person name="Jaeger S."/>
            <person name="Walker R."/>
            <person name="Wylie K."/>
            <person name="Sekhon M."/>
            <person name="Becker M.C."/>
            <person name="O'Laughlin M.D."/>
            <person name="Schaller M.E."/>
            <person name="Fewell G.A."/>
            <person name="Delehaunty K.D."/>
            <person name="Miner T.L."/>
            <person name="Nash W.E."/>
            <person name="Cordes M."/>
            <person name="Du H."/>
            <person name="Sun H."/>
            <person name="Edwards J."/>
            <person name="Bradshaw-Cordum H."/>
            <person name="Ali J."/>
            <person name="Andrews S."/>
            <person name="Isak A."/>
            <person name="Vanbrunt A."/>
            <person name="Nguyen C."/>
            <person name="Du F."/>
            <person name="Lamar B."/>
            <person name="Courtney L."/>
            <person name="Kalicki J."/>
            <person name="Ozersky P."/>
            <person name="Bielicki L."/>
            <person name="Scott K."/>
            <person name="Holmes A."/>
            <person name="Harkins R."/>
            <person name="Harris A."/>
            <person name="Strong C.M."/>
            <person name="Hou S."/>
            <person name="Tomlinson C."/>
            <person name="Dauphin-Kohlberg S."/>
            <person name="Kozlowicz-Reilly A."/>
            <person name="Leonard S."/>
            <person name="Rohlfing T."/>
            <person name="Rock S.M."/>
            <person name="Tin-Wollam A.-M."/>
            <person name="Abbott A."/>
            <person name="Minx P."/>
            <person name="Maupin R."/>
            <person name="Strowmatt C."/>
            <person name="Latreille P."/>
            <person name="Miller N."/>
            <person name="Johnson D."/>
            <person name="Murray J."/>
            <person name="Woessner J.P."/>
            <person name="Wendl M.C."/>
            <person name="Yang S.-P."/>
            <person name="Schultz B.R."/>
            <person name="Wallis J.W."/>
            <person name="Spieth J."/>
            <person name="Bieri T.A."/>
            <person name="Nelson J.O."/>
            <person name="Berkowicz N."/>
            <person name="Wohldmann P.E."/>
            <person name="Cook L.L."/>
            <person name="Hickenbotham M.T."/>
            <person name="Eldred J."/>
            <person name="Williams D."/>
            <person name="Bedell J.A."/>
            <person name="Mardis E.R."/>
            <person name="Clifton S.W."/>
            <person name="Chissoe S.L."/>
            <person name="Marra M.A."/>
            <person name="Raymond C."/>
            <person name="Haugen E."/>
            <person name="Gillett W."/>
            <person name="Zhou Y."/>
            <person name="James R."/>
            <person name="Phelps K."/>
            <person name="Iadanoto S."/>
            <person name="Bubb K."/>
            <person name="Simms E."/>
            <person name="Levy R."/>
            <person name="Clendenning J."/>
            <person name="Kaul R."/>
            <person name="Kent W.J."/>
            <person name="Furey T.S."/>
            <person name="Baertsch R.A."/>
            <person name="Brent M.R."/>
            <person name="Keibler E."/>
            <person name="Flicek P."/>
            <person name="Bork P."/>
            <person name="Suyama M."/>
            <person name="Bailey J.A."/>
            <person name="Portnoy M.E."/>
            <person name="Torrents D."/>
            <person name="Chinwalla A.T."/>
            <person name="Gish W.R."/>
            <person name="Eddy S.R."/>
            <person name="McPherson J.D."/>
            <person name="Olson M.V."/>
            <person name="Eichler E.E."/>
            <person name="Green E.D."/>
            <person name="Waterston R.H."/>
            <person name="Wilson R.K."/>
        </authorList>
    </citation>
    <scope>NUCLEOTIDE SEQUENCE [LARGE SCALE GENOMIC DNA]</scope>
</reference>
<reference key="7">
    <citation type="journal article" date="2003" name="Science">
        <title>Human chromosome 7: DNA sequence and biology.</title>
        <authorList>
            <person name="Scherer S.W."/>
            <person name="Cheung J."/>
            <person name="MacDonald J.R."/>
            <person name="Osborne L.R."/>
            <person name="Nakabayashi K."/>
            <person name="Herbrick J.-A."/>
            <person name="Carson A.R."/>
            <person name="Parker-Katiraee L."/>
            <person name="Skaug J."/>
            <person name="Khaja R."/>
            <person name="Zhang J."/>
            <person name="Hudek A.K."/>
            <person name="Li M."/>
            <person name="Haddad M."/>
            <person name="Duggan G.E."/>
            <person name="Fernandez B.A."/>
            <person name="Kanematsu E."/>
            <person name="Gentles S."/>
            <person name="Christopoulos C.C."/>
            <person name="Choufani S."/>
            <person name="Kwasnicka D."/>
            <person name="Zheng X.H."/>
            <person name="Lai Z."/>
            <person name="Nusskern D.R."/>
            <person name="Zhang Q."/>
            <person name="Gu Z."/>
            <person name="Lu F."/>
            <person name="Zeesman S."/>
            <person name="Nowaczyk M.J."/>
            <person name="Teshima I."/>
            <person name="Chitayat D."/>
            <person name="Shuman C."/>
            <person name="Weksberg R."/>
            <person name="Zackai E.H."/>
            <person name="Grebe T.A."/>
            <person name="Cox S.R."/>
            <person name="Kirkpatrick S.J."/>
            <person name="Rahman N."/>
            <person name="Friedman J.M."/>
            <person name="Heng H.H.Q."/>
            <person name="Pelicci P.G."/>
            <person name="Lo-Coco F."/>
            <person name="Belloni E."/>
            <person name="Shaffer L.G."/>
            <person name="Pober B."/>
            <person name="Morton C.C."/>
            <person name="Gusella J.F."/>
            <person name="Bruns G.A.P."/>
            <person name="Korf B.R."/>
            <person name="Quade B.J."/>
            <person name="Ligon A.H."/>
            <person name="Ferguson H."/>
            <person name="Higgins A.W."/>
            <person name="Leach N.T."/>
            <person name="Herrick S.R."/>
            <person name="Lemyre E."/>
            <person name="Farra C.G."/>
            <person name="Kim H.-G."/>
            <person name="Summers A.M."/>
            <person name="Gripp K.W."/>
            <person name="Roberts W."/>
            <person name="Szatmari P."/>
            <person name="Winsor E.J.T."/>
            <person name="Grzeschik K.-H."/>
            <person name="Teebi A."/>
            <person name="Minassian B.A."/>
            <person name="Kere J."/>
            <person name="Armengol L."/>
            <person name="Pujana M.A."/>
            <person name="Estivill X."/>
            <person name="Wilson M.D."/>
            <person name="Koop B.F."/>
            <person name="Tosi S."/>
            <person name="Moore G.E."/>
            <person name="Boright A.P."/>
            <person name="Zlotorynski E."/>
            <person name="Kerem B."/>
            <person name="Kroisel P.M."/>
            <person name="Petek E."/>
            <person name="Oscier D.G."/>
            <person name="Mould S.J."/>
            <person name="Doehner H."/>
            <person name="Doehner K."/>
            <person name="Rommens J.M."/>
            <person name="Vincent J.B."/>
            <person name="Venter J.C."/>
            <person name="Li P.W."/>
            <person name="Mural R.J."/>
            <person name="Adams M.D."/>
            <person name="Tsui L.-C."/>
        </authorList>
    </citation>
    <scope>NUCLEOTIDE SEQUENCE [LARGE SCALE GENOMIC DNA]</scope>
</reference>
<reference key="8">
    <citation type="submission" date="2005-09" db="EMBL/GenBank/DDBJ databases">
        <authorList>
            <person name="Mural R.J."/>
            <person name="Istrail S."/>
            <person name="Sutton G.G."/>
            <person name="Florea L."/>
            <person name="Halpern A.L."/>
            <person name="Mobarry C.M."/>
            <person name="Lippert R."/>
            <person name="Walenz B."/>
            <person name="Shatkay H."/>
            <person name="Dew I."/>
            <person name="Miller J.R."/>
            <person name="Flanigan M.J."/>
            <person name="Edwards N.J."/>
            <person name="Bolanos R."/>
            <person name="Fasulo D."/>
            <person name="Halldorsson B.V."/>
            <person name="Hannenhalli S."/>
            <person name="Turner R."/>
            <person name="Yooseph S."/>
            <person name="Lu F."/>
            <person name="Nusskern D.R."/>
            <person name="Shue B.C."/>
            <person name="Zheng X.H."/>
            <person name="Zhong F."/>
            <person name="Delcher A.L."/>
            <person name="Huson D.H."/>
            <person name="Kravitz S.A."/>
            <person name="Mouchard L."/>
            <person name="Reinert K."/>
            <person name="Remington K.A."/>
            <person name="Clark A.G."/>
            <person name="Waterman M.S."/>
            <person name="Eichler E.E."/>
            <person name="Adams M.D."/>
            <person name="Hunkapiller M.W."/>
            <person name="Myers E.W."/>
            <person name="Venter J.C."/>
        </authorList>
    </citation>
    <scope>NUCLEOTIDE SEQUENCE [LARGE SCALE GENOMIC DNA]</scope>
</reference>
<reference key="9">
    <citation type="journal article" date="2004" name="Genome Res.">
        <title>The status, quality, and expansion of the NIH full-length cDNA project: the Mammalian Gene Collection (MGC).</title>
        <authorList>
            <consortium name="The MGC Project Team"/>
        </authorList>
    </citation>
    <scope>NUCLEOTIDE SEQUENCE [LARGE SCALE MRNA] (ISOFORM 3)</scope>
    <source>
        <tissue>Brain</tissue>
    </source>
</reference>
<reference key="10">
    <citation type="journal article" date="1997" name="Hum. Genet.">
        <title>cDNAs with long CAG trinucleotide repeats from human brain.</title>
        <authorList>
            <person name="Margolis R.L."/>
            <person name="Abraham M.R."/>
            <person name="Gatchell S.B."/>
            <person name="Li S.-H."/>
            <person name="Kidwai A.S."/>
            <person name="Breschel T.S."/>
            <person name="Stine O.C."/>
            <person name="Callahan C."/>
            <person name="McInnis M.G."/>
            <person name="Ross C.A."/>
        </authorList>
    </citation>
    <scope>NUCLEOTIDE SEQUENCE [MRNA] OF 1-304 (ISOFORM 1)</scope>
    <source>
        <tissue>Brain cortex</tissue>
    </source>
</reference>
<reference key="11">
    <citation type="journal article" date="2002" name="Nature">
        <title>Molecular evolution of FOXP2, a gene involved in speech and language.</title>
        <authorList>
            <person name="Enard W."/>
            <person name="Przeworski M."/>
            <person name="Fisher S.E."/>
            <person name="Lai C.S.L."/>
            <person name="Wiebe V."/>
            <person name="Kitano T."/>
            <person name="Monaco A.P."/>
            <person name="Paeaebo S."/>
        </authorList>
    </citation>
    <scope>NUCLEOTIDE SEQUENCE [GENOMIC DNA] OF 113-329</scope>
</reference>
<reference key="12">
    <citation type="journal article" date="2004" name="J. Neurosci.">
        <title>Parallel FoxP1 and FoxP2 expression in songbird and human brain predicts functional interaction.</title>
        <authorList>
            <person name="Teramitsu I."/>
            <person name="Kudo L.C."/>
            <person name="London S.E."/>
            <person name="Geschwind D.H."/>
            <person name="White S.A."/>
        </authorList>
    </citation>
    <scope>DEVELOPMENTAL STAGE</scope>
</reference>
<reference key="13">
    <citation type="journal article" date="2014" name="Nat. Commun.">
        <title>De novo TBR1 mutations in sporadic autism disrupt protein functions.</title>
        <authorList>
            <person name="Deriziotis P."/>
            <person name="O'Roak B.J."/>
            <person name="Graham S.A."/>
            <person name="Estruch S.B."/>
            <person name="Dimitropoulou D."/>
            <person name="Bernier R.A."/>
            <person name="Gerdts J."/>
            <person name="Shendure J."/>
            <person name="Eichler E.E."/>
            <person name="Fisher S.E."/>
        </authorList>
    </citation>
    <scope>INTERACTION WITH TBR1</scope>
    <scope>CHARACTERIZATION OF VARIANT SPCH1 HIS-553</scope>
</reference>
<reference key="14">
    <citation type="journal article" date="2016" name="Hum. Mol. Genet.">
        <title>Identification and functional characterization of de novo FOXP1 variants provides novel insights into the etiology of neurodevelopmental disorder.</title>
        <authorList>
            <person name="Sollis E."/>
            <person name="Graham S.A."/>
            <person name="Vino A."/>
            <person name="Froehlich H."/>
            <person name="Vreeburg M."/>
            <person name="Dimitropoulou D."/>
            <person name="Gilissen C."/>
            <person name="Pfundt R."/>
            <person name="Rappold G.A."/>
            <person name="Brunner H.G."/>
            <person name="Deriziotis P."/>
            <person name="Fisher S.E."/>
        </authorList>
    </citation>
    <scope>INTERACTION WITH FOXP1</scope>
</reference>
<reference key="15">
    <citation type="journal article" date="2018" name="Sci. Rep.">
        <title>Functional characterization of TBR1 variants in neurodevelopmental disorder.</title>
        <authorList>
            <person name="den Hoed J."/>
            <person name="Sollis E."/>
            <person name="Venselaar H."/>
            <person name="Estruch S.B."/>
            <person name="Deriziotis P."/>
            <person name="Fisher S.E."/>
        </authorList>
    </citation>
    <scope>INTERACTION WITH TBR1</scope>
</reference>
<reference key="16">
    <citation type="journal article" date="2020" name="Am. J. Hum. Genet.">
        <title>Mutations of the transcriptional corepressor ZMYM2 cause syndromic urinary tract malformations.</title>
        <authorList>
            <person name="Connaughton D.M."/>
            <person name="Dai R."/>
            <person name="Owen D.J."/>
            <person name="Marquez J."/>
            <person name="Mann N."/>
            <person name="Graham-Paquin A.L."/>
            <person name="Nakayama M."/>
            <person name="Coyaud E."/>
            <person name="Laurent E.M.N."/>
            <person name="St-Germain J.R."/>
            <person name="Blok L.S."/>
            <person name="Vino A."/>
            <person name="Klaembt V."/>
            <person name="Deutsch K."/>
            <person name="Wu C.W."/>
            <person name="Kolvenbach C.M."/>
            <person name="Kause F."/>
            <person name="Ottlewski I."/>
            <person name="Schneider R."/>
            <person name="Kitzler T.M."/>
            <person name="Majmundar A.J."/>
            <person name="Buerger F."/>
            <person name="Onuchic-Whitford A.C."/>
            <person name="Youying M."/>
            <person name="Kolb A."/>
            <person name="Salmanullah D."/>
            <person name="Chen E."/>
            <person name="van der Ven A.T."/>
            <person name="Rao J."/>
            <person name="Ityel H."/>
            <person name="Seltzsam S."/>
            <person name="Rieke J.M."/>
            <person name="Chen J."/>
            <person name="Vivante A."/>
            <person name="Hwang D.Y."/>
            <person name="Kohl S."/>
            <person name="Dworschak G.C."/>
            <person name="Hermle T."/>
            <person name="Alders M."/>
            <person name="Bartolomaeus T."/>
            <person name="Bauer S.B."/>
            <person name="Baum M.A."/>
            <person name="Brilstra E.H."/>
            <person name="Challman T.D."/>
            <person name="Zyskind J."/>
            <person name="Costin C.E."/>
            <person name="Dipple K.M."/>
            <person name="Duijkers F.A."/>
            <person name="Ferguson M."/>
            <person name="Fitzpatrick D.R."/>
            <person name="Fick R."/>
            <person name="Glass I.A."/>
            <person name="Hulick P.J."/>
            <person name="Kline A.D."/>
            <person name="Krey I."/>
            <person name="Kumar S."/>
            <person name="Lu W."/>
            <person name="Marco E.J."/>
            <person name="Wentzensen I.M."/>
            <person name="Mefford H.C."/>
            <person name="Platzer K."/>
            <person name="Povolotskaya I.S."/>
            <person name="Savatt J.M."/>
            <person name="Shcherbakova N.V."/>
            <person name="Senguttuvan P."/>
            <person name="Squire A.E."/>
            <person name="Stein D.R."/>
            <person name="Thiffault I."/>
            <person name="Voinova V.Y."/>
            <person name="Somers M.J.G."/>
            <person name="Ferguson M.A."/>
            <person name="Traum A.Z."/>
            <person name="Daouk G.H."/>
            <person name="Daga A."/>
            <person name="Rodig N.M."/>
            <person name="Terhal P.A."/>
            <person name="van Binsbergen E."/>
            <person name="Eid L.A."/>
            <person name="Tasic V."/>
            <person name="Rasouly H.M."/>
            <person name="Lim T.Y."/>
            <person name="Ahram D.F."/>
            <person name="Gharavi A.G."/>
            <person name="Reutter H.M."/>
            <person name="Rehm H.L."/>
            <person name="MacArthur D.G."/>
            <person name="Lek M."/>
            <person name="Laricchia K.M."/>
            <person name="Lifton R.P."/>
            <person name="Xu H."/>
            <person name="Mane S.M."/>
            <person name="Sanna-Cherchi S."/>
            <person name="Sharrocks A.D."/>
            <person name="Raught B."/>
            <person name="Fisher S.E."/>
            <person name="Bouchard M."/>
            <person name="Khokha M.K."/>
            <person name="Shril S."/>
            <person name="Hildebrandt F."/>
        </authorList>
    </citation>
    <scope>INTERACTION WITH ZMYM2</scope>
</reference>
<protein>
    <recommendedName>
        <fullName>Forkhead box protein P2</fullName>
    </recommendedName>
    <alternativeName>
        <fullName>CAG repeat protein 44</fullName>
    </alternativeName>
    <alternativeName>
        <fullName>Trinucleotide repeat-containing gene 10 protein</fullName>
    </alternativeName>
</protein>
<feature type="chain" id="PRO_0000091879" description="Forkhead box protein P2">
    <location>
        <begin position="1"/>
        <end position="715"/>
    </location>
</feature>
<feature type="zinc finger region" description="C2H2-type">
    <location>
        <begin position="346"/>
        <end position="371"/>
    </location>
</feature>
<feature type="DNA-binding region" description="Fork-head" evidence="3">
    <location>
        <begin position="504"/>
        <end position="594"/>
    </location>
</feature>
<feature type="region of interest" description="Disordered" evidence="4">
    <location>
        <begin position="1"/>
        <end position="46"/>
    </location>
</feature>
<feature type="region of interest" description="Disordered" evidence="4">
    <location>
        <begin position="281"/>
        <end position="339"/>
    </location>
</feature>
<feature type="region of interest" description="Leucine-zipper">
    <location>
        <begin position="388"/>
        <end position="409"/>
    </location>
</feature>
<feature type="region of interest" description="CTBP1-binding" evidence="1">
    <location>
        <begin position="422"/>
        <end position="426"/>
    </location>
</feature>
<feature type="region of interest" description="Disordered" evidence="4">
    <location>
        <begin position="438"/>
        <end position="465"/>
    </location>
</feature>
<feature type="region of interest" description="Disordered" evidence="4">
    <location>
        <begin position="649"/>
        <end position="668"/>
    </location>
</feature>
<feature type="region of interest" description="Disordered" evidence="4">
    <location>
        <begin position="678"/>
        <end position="715"/>
    </location>
</feature>
<feature type="compositionally biased region" description="Polar residues" evidence="4">
    <location>
        <begin position="1"/>
        <end position="28"/>
    </location>
</feature>
<feature type="compositionally biased region" description="Low complexity" evidence="4">
    <location>
        <begin position="292"/>
        <end position="305"/>
    </location>
</feature>
<feature type="compositionally biased region" description="Basic and acidic residues" evidence="4">
    <location>
        <begin position="326"/>
        <end position="337"/>
    </location>
</feature>
<feature type="compositionally biased region" description="Low complexity" evidence="4">
    <location>
        <begin position="438"/>
        <end position="459"/>
    </location>
</feature>
<feature type="compositionally biased region" description="Acidic residues" evidence="4">
    <location>
        <begin position="699"/>
        <end position="715"/>
    </location>
</feature>
<feature type="splice variant" id="VSP_001558" description="In isoform 3." evidence="14">
    <location>
        <begin position="1"/>
        <end position="92"/>
    </location>
</feature>
<feature type="splice variant" id="VSP_011532" description="In isoform 4 and isoform 5." evidence="15 16">
    <original>Q</original>
    <variation>QELLPETKLCICGHSSGDGHPHNTFA</variation>
    <location>
        <position position="86"/>
    </location>
</feature>
<feature type="splice variant" id="VSP_011533" description="In isoform 8." evidence="13">
    <original>V</original>
    <variation>P</variation>
    <location>
        <position position="87"/>
    </location>
</feature>
<feature type="splice variant" id="VSP_011534" description="In isoform 8." evidence="13">
    <location>
        <begin position="88"/>
        <end position="715"/>
    </location>
</feature>
<feature type="splice variant" id="VSP_043464" description="In isoform 9." evidence="13">
    <original>Q</original>
    <variation>QDFLDSGLENFRAALEKN</variation>
    <location>
        <position position="132"/>
    </location>
</feature>
<feature type="splice variant" id="VSP_011535" description="In isoform 5." evidence="15">
    <original>QQLQEFYKKQQ</original>
    <variation>VMWVTCFGVLA</variation>
    <location>
        <begin position="133"/>
        <end position="143"/>
    </location>
</feature>
<feature type="splice variant" id="VSP_011536" description="In isoform 5." evidence="15">
    <location>
        <begin position="144"/>
        <end position="715"/>
    </location>
</feature>
<feature type="splice variant" id="VSP_011537" description="In isoform 7." evidence="12">
    <location>
        <begin position="366"/>
        <end position="715"/>
    </location>
</feature>
<feature type="splice variant" id="VSP_011538" description="In isoform 6." evidence="12">
    <original>LNLVSSVTMS</original>
    <variation>VSAYCFINSK</variation>
    <location>
        <begin position="423"/>
        <end position="432"/>
    </location>
</feature>
<feature type="splice variant" id="VSP_011539" description="In isoform 6." evidence="12">
    <location>
        <begin position="433"/>
        <end position="715"/>
    </location>
</feature>
<feature type="sequence variant" id="VAR_012278" description="In SPCH1; reduced interaction with TBR1; dbSNP:rs121908377." evidence="5 8">
    <original>R</original>
    <variation>H</variation>
    <location>
        <position position="553"/>
    </location>
</feature>
<feature type="sequence conflict" description="In Ref. 2; AAM60762." evidence="17" ref="2">
    <original>A</original>
    <variation>V</variation>
    <location>
        <position position="29"/>
    </location>
</feature>
<feature type="sequence conflict" description="In Ref. 10; AAB91439." evidence="17" ref="10">
    <original>Q</original>
    <variation>H</variation>
    <location>
        <position position="134"/>
    </location>
</feature>
<feature type="sequence conflict" description="In Ref. 10; AAB91439." evidence="17" ref="10">
    <original>DLTTNNSSSTTSSNT</original>
    <variation>EEFPVQGPAAVCAGL</variation>
    <location>
        <begin position="290"/>
        <end position="304"/>
    </location>
</feature>
<feature type="sequence conflict" description="In Ref. 2; AAM60766." evidence="17" ref="2">
    <original>S</original>
    <variation>L</variation>
    <location>
        <position position="414"/>
    </location>
</feature>
<feature type="helix" evidence="18">
    <location>
        <begin position="509"/>
        <end position="519"/>
    </location>
</feature>
<feature type="helix" evidence="18">
    <location>
        <begin position="527"/>
        <end position="541"/>
    </location>
</feature>
<feature type="helix" evidence="18">
    <location>
        <begin position="545"/>
        <end position="558"/>
    </location>
</feature>
<feature type="strand" evidence="19">
    <location>
        <begin position="562"/>
        <end position="567"/>
    </location>
</feature>
<feature type="strand" evidence="18">
    <location>
        <begin position="568"/>
        <end position="572"/>
    </location>
</feature>
<feature type="helix" evidence="18">
    <location>
        <begin position="577"/>
        <end position="583"/>
    </location>
</feature>
<dbReference type="EMBL" id="AF337817">
    <property type="protein sequence ID" value="AAL10762.1"/>
    <property type="molecule type" value="mRNA"/>
</dbReference>
<dbReference type="EMBL" id="AF467252">
    <property type="protein sequence ID" value="AAM60762.1"/>
    <property type="molecule type" value="mRNA"/>
</dbReference>
<dbReference type="EMBL" id="AF467253">
    <property type="protein sequence ID" value="AAM60763.1"/>
    <property type="molecule type" value="mRNA"/>
</dbReference>
<dbReference type="EMBL" id="AF467254">
    <property type="protein sequence ID" value="AAM60764.1"/>
    <property type="molecule type" value="mRNA"/>
</dbReference>
<dbReference type="EMBL" id="AF467255">
    <property type="protein sequence ID" value="AAM60765.1"/>
    <property type="molecule type" value="mRNA"/>
</dbReference>
<dbReference type="EMBL" id="AF467256">
    <property type="protein sequence ID" value="AAM60766.1"/>
    <property type="molecule type" value="mRNA"/>
</dbReference>
<dbReference type="EMBL" id="AF467257">
    <property type="protein sequence ID" value="AAM60767.1"/>
    <property type="molecule type" value="mRNA"/>
</dbReference>
<dbReference type="EMBL" id="AF493430">
    <property type="protein sequence ID" value="AAM13672.1"/>
    <property type="molecule type" value="mRNA"/>
</dbReference>
<dbReference type="EMBL" id="AY144615">
    <property type="protein sequence ID" value="AAN60016.1"/>
    <property type="molecule type" value="mRNA"/>
</dbReference>
<dbReference type="EMBL" id="AK131266">
    <property type="protein sequence ID" value="BAD18444.1"/>
    <property type="status" value="ALT_SEQ"/>
    <property type="molecule type" value="mRNA"/>
</dbReference>
<dbReference type="EMBL" id="AK296957">
    <property type="protein sequence ID" value="BAG59501.1"/>
    <property type="molecule type" value="mRNA"/>
</dbReference>
<dbReference type="EMBL" id="AC003992">
    <property type="protein sequence ID" value="AAS07399.1"/>
    <property type="molecule type" value="Genomic_DNA"/>
</dbReference>
<dbReference type="EMBL" id="AC020606">
    <property type="protein sequence ID" value="AAS07502.1"/>
    <property type="molecule type" value="Genomic_DNA"/>
</dbReference>
<dbReference type="EMBL" id="AC073626">
    <property type="status" value="NOT_ANNOTATED_CDS"/>
    <property type="molecule type" value="Genomic_DNA"/>
</dbReference>
<dbReference type="EMBL" id="AC074000">
    <property type="status" value="NOT_ANNOTATED_CDS"/>
    <property type="molecule type" value="Genomic_DNA"/>
</dbReference>
<dbReference type="EMBL" id="AC092148">
    <property type="status" value="NOT_ANNOTATED_CDS"/>
    <property type="molecule type" value="Genomic_DNA"/>
</dbReference>
<dbReference type="EMBL" id="AC092606">
    <property type="status" value="NOT_ANNOTATED_CDS"/>
    <property type="molecule type" value="Genomic_DNA"/>
</dbReference>
<dbReference type="EMBL" id="CH236947">
    <property type="protein sequence ID" value="EAL24367.1"/>
    <property type="molecule type" value="Genomic_DNA"/>
</dbReference>
<dbReference type="EMBL" id="CH236947">
    <property type="protein sequence ID" value="EAL24369.1"/>
    <property type="molecule type" value="Genomic_DNA"/>
</dbReference>
<dbReference type="EMBL" id="CH471070">
    <property type="protein sequence ID" value="EAW83484.1"/>
    <property type="molecule type" value="Genomic_DNA"/>
</dbReference>
<dbReference type="EMBL" id="CH471070">
    <property type="protein sequence ID" value="EAW83486.1"/>
    <property type="molecule type" value="Genomic_DNA"/>
</dbReference>
<dbReference type="EMBL" id="BC126104">
    <property type="protein sequence ID" value="AAI26105.1"/>
    <property type="molecule type" value="mRNA"/>
</dbReference>
<dbReference type="EMBL" id="BC143866">
    <property type="protein sequence ID" value="AAI43867.1"/>
    <property type="molecule type" value="mRNA"/>
</dbReference>
<dbReference type="EMBL" id="U80741">
    <property type="protein sequence ID" value="AAB91439.1"/>
    <property type="molecule type" value="mRNA"/>
</dbReference>
<dbReference type="EMBL" id="AF515031">
    <property type="protein sequence ID" value="AAN03389.1"/>
    <property type="molecule type" value="Genomic_DNA"/>
</dbReference>
<dbReference type="EMBL" id="AF515032">
    <property type="protein sequence ID" value="AAN03390.1"/>
    <property type="molecule type" value="Genomic_DNA"/>
</dbReference>
<dbReference type="EMBL" id="AF515033">
    <property type="protein sequence ID" value="AAN03391.1"/>
    <property type="molecule type" value="Genomic_DNA"/>
</dbReference>
<dbReference type="EMBL" id="AF515034">
    <property type="protein sequence ID" value="AAN03392.1"/>
    <property type="molecule type" value="Genomic_DNA"/>
</dbReference>
<dbReference type="EMBL" id="AF515035">
    <property type="protein sequence ID" value="AAN03393.1"/>
    <property type="molecule type" value="Genomic_DNA"/>
</dbReference>
<dbReference type="EMBL" id="AF515036">
    <property type="protein sequence ID" value="AAN03394.1"/>
    <property type="molecule type" value="Genomic_DNA"/>
</dbReference>
<dbReference type="EMBL" id="AF515037">
    <property type="protein sequence ID" value="AAN03395.1"/>
    <property type="molecule type" value="Genomic_DNA"/>
</dbReference>
<dbReference type="EMBL" id="AF515038">
    <property type="protein sequence ID" value="AAN03396.1"/>
    <property type="molecule type" value="Genomic_DNA"/>
</dbReference>
<dbReference type="EMBL" id="AF515039">
    <property type="protein sequence ID" value="AAN03397.1"/>
    <property type="molecule type" value="Genomic_DNA"/>
</dbReference>
<dbReference type="EMBL" id="AF515040">
    <property type="protein sequence ID" value="AAN03398.1"/>
    <property type="molecule type" value="Genomic_DNA"/>
</dbReference>
<dbReference type="EMBL" id="AF515041">
    <property type="protein sequence ID" value="AAN03399.1"/>
    <property type="molecule type" value="Genomic_DNA"/>
</dbReference>
<dbReference type="EMBL" id="AF515042">
    <property type="protein sequence ID" value="AAN03400.1"/>
    <property type="molecule type" value="Genomic_DNA"/>
</dbReference>
<dbReference type="EMBL" id="AF515043">
    <property type="protein sequence ID" value="AAN03401.1"/>
    <property type="molecule type" value="Genomic_DNA"/>
</dbReference>
<dbReference type="EMBL" id="AF515044">
    <property type="protein sequence ID" value="AAN03402.1"/>
    <property type="molecule type" value="Genomic_DNA"/>
</dbReference>
<dbReference type="EMBL" id="AF515045">
    <property type="protein sequence ID" value="AAN03403.1"/>
    <property type="molecule type" value="Genomic_DNA"/>
</dbReference>
<dbReference type="EMBL" id="AF515046">
    <property type="protein sequence ID" value="AAN03404.1"/>
    <property type="molecule type" value="Genomic_DNA"/>
</dbReference>
<dbReference type="EMBL" id="AF515047">
    <property type="protein sequence ID" value="AAN03405.1"/>
    <property type="molecule type" value="Genomic_DNA"/>
</dbReference>
<dbReference type="EMBL" id="AF515048">
    <property type="protein sequence ID" value="AAN03406.1"/>
    <property type="molecule type" value="Genomic_DNA"/>
</dbReference>
<dbReference type="EMBL" id="AF515049">
    <property type="protein sequence ID" value="AAN03407.1"/>
    <property type="molecule type" value="Genomic_DNA"/>
</dbReference>
<dbReference type="EMBL" id="AF515050">
    <property type="protein sequence ID" value="AAN03408.1"/>
    <property type="molecule type" value="Genomic_DNA"/>
</dbReference>
<dbReference type="CCDS" id="CCDS43635.1">
    <molecule id="O15409-4"/>
</dbReference>
<dbReference type="CCDS" id="CCDS55154.1">
    <molecule id="O15409-9"/>
</dbReference>
<dbReference type="CCDS" id="CCDS5760.1">
    <molecule id="O15409-1"/>
</dbReference>
<dbReference type="CCDS" id="CCDS5761.2">
    <molecule id="O15409-6"/>
</dbReference>
<dbReference type="RefSeq" id="NP_001166237.1">
    <property type="nucleotide sequence ID" value="NM_001172766.2"/>
</dbReference>
<dbReference type="RefSeq" id="NP_001166238.1">
    <property type="nucleotide sequence ID" value="NM_001172767.2"/>
</dbReference>
<dbReference type="RefSeq" id="NP_055306.1">
    <molecule id="O15409-1"/>
    <property type="nucleotide sequence ID" value="NM_014491.4"/>
</dbReference>
<dbReference type="RefSeq" id="NP_683696.2">
    <molecule id="O15409-4"/>
    <property type="nucleotide sequence ID" value="NM_148898.4"/>
</dbReference>
<dbReference type="RefSeq" id="NP_683697.2">
    <molecule id="O15409-6"/>
    <property type="nucleotide sequence ID" value="NM_148899.3"/>
</dbReference>
<dbReference type="RefSeq" id="NP_683698.2">
    <molecule id="O15409-9"/>
    <property type="nucleotide sequence ID" value="NM_148900.4"/>
</dbReference>
<dbReference type="RefSeq" id="XP_016868290.1">
    <property type="nucleotide sequence ID" value="XM_017012801.1"/>
</dbReference>
<dbReference type="PDB" id="2A07">
    <property type="method" value="X-ray"/>
    <property type="resolution" value="1.90 A"/>
    <property type="chains" value="F/G/H/I/J/K=502-594"/>
</dbReference>
<dbReference type="PDB" id="2AS5">
    <property type="method" value="X-ray"/>
    <property type="resolution" value="2.70 A"/>
    <property type="chains" value="F/G=502-594"/>
</dbReference>
<dbReference type="PDBsum" id="2A07"/>
<dbReference type="PDBsum" id="2AS5"/>
<dbReference type="SMR" id="O15409"/>
<dbReference type="BioGRID" id="125073">
    <property type="interactions" value="68"/>
</dbReference>
<dbReference type="ComplexPortal" id="CPX-8775">
    <property type="entry name" value="FOXP2 transcription factor homodimer"/>
</dbReference>
<dbReference type="ComplexPortal" id="CPX-8802">
    <property type="entry name" value="FOXP1-FOXP2 transcription factor complex"/>
</dbReference>
<dbReference type="ComplexPortal" id="CPX-8805">
    <property type="entry name" value="FOXP2-FOXP4 transcription factor complex"/>
</dbReference>
<dbReference type="DIP" id="DIP-29004N"/>
<dbReference type="FunCoup" id="O15409">
    <property type="interactions" value="1473"/>
</dbReference>
<dbReference type="IntAct" id="O15409">
    <property type="interactions" value="33"/>
</dbReference>
<dbReference type="MINT" id="O15409"/>
<dbReference type="STRING" id="9606.ENSP00000386200"/>
<dbReference type="GlyGen" id="O15409">
    <property type="glycosylation" value="2 sites, 1 N-linked glycan (1 site), 1 O-linked glycan (1 site)"/>
</dbReference>
<dbReference type="iPTMnet" id="O15409"/>
<dbReference type="PhosphoSitePlus" id="O15409"/>
<dbReference type="BioMuta" id="FOXP2"/>
<dbReference type="jPOST" id="O15409"/>
<dbReference type="MassIVE" id="O15409"/>
<dbReference type="PaxDb" id="9606-ENSP00000386200"/>
<dbReference type="PeptideAtlas" id="O15409"/>
<dbReference type="ProteomicsDB" id="48644">
    <molecule id="O15409-1"/>
</dbReference>
<dbReference type="ProteomicsDB" id="48645">
    <molecule id="O15409-2"/>
</dbReference>
<dbReference type="ProteomicsDB" id="48646">
    <molecule id="O15409-4"/>
</dbReference>
<dbReference type="ProteomicsDB" id="48647">
    <molecule id="O15409-5"/>
</dbReference>
<dbReference type="ProteomicsDB" id="48648">
    <molecule id="O15409-6"/>
</dbReference>
<dbReference type="ProteomicsDB" id="48649">
    <molecule id="O15409-7"/>
</dbReference>
<dbReference type="ProteomicsDB" id="48650">
    <molecule id="O15409-8"/>
</dbReference>
<dbReference type="ProteomicsDB" id="48651">
    <molecule id="O15409-9"/>
</dbReference>
<dbReference type="Pumba" id="O15409"/>
<dbReference type="Antibodypedia" id="672">
    <property type="antibodies" value="468 antibodies from 39 providers"/>
</dbReference>
<dbReference type="DNASU" id="93986"/>
<dbReference type="Ensembl" id="ENST00000350908.9">
    <molecule id="O15409-1"/>
    <property type="protein sequence ID" value="ENSP00000265436.7"/>
    <property type="gene ID" value="ENSG00000128573.28"/>
</dbReference>
<dbReference type="Ensembl" id="ENST00000360232.8">
    <molecule id="O15409-6"/>
    <property type="protein sequence ID" value="ENSP00000353367.4"/>
    <property type="gene ID" value="ENSG00000128573.28"/>
</dbReference>
<dbReference type="Ensembl" id="ENST00000378237.7">
    <molecule id="O15409-7"/>
    <property type="protein sequence ID" value="ENSP00000367482.3"/>
    <property type="gene ID" value="ENSG00000128573.28"/>
</dbReference>
<dbReference type="Ensembl" id="ENST00000393489.8">
    <molecule id="O15409-8"/>
    <property type="protein sequence ID" value="ENSP00000377129.4"/>
    <property type="gene ID" value="ENSG00000128573.28"/>
</dbReference>
<dbReference type="Ensembl" id="ENST00000393494.6">
    <molecule id="O15409-1"/>
    <property type="protein sequence ID" value="ENSP00000377132.2"/>
    <property type="gene ID" value="ENSG00000128573.28"/>
</dbReference>
<dbReference type="Ensembl" id="ENST00000403559.9">
    <molecule id="O15409-9"/>
    <property type="protein sequence ID" value="ENSP00000385069.4"/>
    <property type="gene ID" value="ENSG00000128573.28"/>
</dbReference>
<dbReference type="Ensembl" id="ENST00000408937.7">
    <molecule id="O15409-4"/>
    <property type="protein sequence ID" value="ENSP00000386200.3"/>
    <property type="gene ID" value="ENSG00000128573.28"/>
</dbReference>
<dbReference type="Ensembl" id="ENST00000412402.5">
    <molecule id="O15409-8"/>
    <property type="protein sequence ID" value="ENSP00000405470.1"/>
    <property type="gene ID" value="ENSG00000128573.28"/>
</dbReference>
<dbReference type="Ensembl" id="ENST00000441290.6">
    <molecule id="O15409-8"/>
    <property type="protein sequence ID" value="ENSP00000416825.1"/>
    <property type="gene ID" value="ENSG00000128573.28"/>
</dbReference>
<dbReference type="Ensembl" id="ENST00000635109.1">
    <molecule id="O15409-8"/>
    <property type="protein sequence ID" value="ENSP00000489457.1"/>
    <property type="gene ID" value="ENSG00000128573.28"/>
</dbReference>
<dbReference type="Ensembl" id="ENST00000703613.1">
    <molecule id="O15409-9"/>
    <property type="protein sequence ID" value="ENSP00000515397.1"/>
    <property type="gene ID" value="ENSG00000128573.28"/>
</dbReference>
<dbReference type="Ensembl" id="ENST00000703614.1">
    <molecule id="O15409-1"/>
    <property type="protein sequence ID" value="ENSP00000515398.1"/>
    <property type="gene ID" value="ENSG00000128573.28"/>
</dbReference>
<dbReference type="GeneID" id="93986"/>
<dbReference type="KEGG" id="hsa:93986"/>
<dbReference type="MANE-Select" id="ENST00000350908.9">
    <property type="protein sequence ID" value="ENSP00000265436.7"/>
    <property type="RefSeq nucleotide sequence ID" value="NM_014491.4"/>
    <property type="RefSeq protein sequence ID" value="NP_055306.1"/>
</dbReference>
<dbReference type="UCSC" id="uc003vgx.3">
    <molecule id="O15409-1"/>
    <property type="organism name" value="human"/>
</dbReference>
<dbReference type="AGR" id="HGNC:13875"/>
<dbReference type="CTD" id="93986"/>
<dbReference type="DisGeNET" id="93986"/>
<dbReference type="GeneCards" id="FOXP2"/>
<dbReference type="GeneReviews" id="FOXP2"/>
<dbReference type="HGNC" id="HGNC:13875">
    <property type="gene designation" value="FOXP2"/>
</dbReference>
<dbReference type="HPA" id="ENSG00000128573">
    <property type="expression patterns" value="Tissue enhanced (intestine)"/>
</dbReference>
<dbReference type="MalaCards" id="FOXP2"/>
<dbReference type="MIM" id="602081">
    <property type="type" value="phenotype"/>
</dbReference>
<dbReference type="MIM" id="605317">
    <property type="type" value="gene"/>
</dbReference>
<dbReference type="neXtProt" id="NX_O15409"/>
<dbReference type="OpenTargets" id="ENSG00000128573"/>
<dbReference type="Orphanet" id="251061">
    <property type="disease" value="7q31 microdeletion syndrome"/>
</dbReference>
<dbReference type="Orphanet" id="209908">
    <property type="disease" value="Isolated childhood apraxia of speech"/>
</dbReference>
<dbReference type="PharmGKB" id="PA28242"/>
<dbReference type="VEuPathDB" id="HostDB:ENSG00000128573"/>
<dbReference type="eggNOG" id="KOG4385">
    <property type="taxonomic scope" value="Eukaryota"/>
</dbReference>
<dbReference type="GeneTree" id="ENSGT00940000155480"/>
<dbReference type="HOGENOM" id="CLU_2557677_0_0_1"/>
<dbReference type="InParanoid" id="O15409"/>
<dbReference type="OMA" id="REYPESH"/>
<dbReference type="OrthoDB" id="5830876at2759"/>
<dbReference type="PAN-GO" id="O15409">
    <property type="GO annotations" value="4 GO annotations based on evolutionary models"/>
</dbReference>
<dbReference type="PhylomeDB" id="O15409"/>
<dbReference type="TreeFam" id="TF326978"/>
<dbReference type="PathwayCommons" id="O15409"/>
<dbReference type="SignaLink" id="O15409"/>
<dbReference type="SIGNOR" id="O15409"/>
<dbReference type="BioGRID-ORCS" id="93986">
    <property type="hits" value="15 hits in 1171 CRISPR screens"/>
</dbReference>
<dbReference type="ChiTaRS" id="FOXP2">
    <property type="organism name" value="human"/>
</dbReference>
<dbReference type="EvolutionaryTrace" id="O15409"/>
<dbReference type="GeneWiki" id="FOXP2"/>
<dbReference type="GenomeRNAi" id="93986"/>
<dbReference type="Pharos" id="O15409">
    <property type="development level" value="Tbio"/>
</dbReference>
<dbReference type="PRO" id="PR:O15409"/>
<dbReference type="Proteomes" id="UP000005640">
    <property type="component" value="Chromosome 7"/>
</dbReference>
<dbReference type="RNAct" id="O15409">
    <property type="molecule type" value="protein"/>
</dbReference>
<dbReference type="Bgee" id="ENSG00000128573">
    <property type="expression patterns" value="Expressed in buccal mucosa cell and 180 other cell types or tissues"/>
</dbReference>
<dbReference type="ExpressionAtlas" id="O15409">
    <property type="expression patterns" value="baseline and differential"/>
</dbReference>
<dbReference type="GO" id="GO:0000785">
    <property type="term" value="C:chromatin"/>
    <property type="evidence" value="ECO:0000247"/>
    <property type="project" value="NTNU_SB"/>
</dbReference>
<dbReference type="GO" id="GO:0005634">
    <property type="term" value="C:nucleus"/>
    <property type="evidence" value="ECO:0000318"/>
    <property type="project" value="GO_Central"/>
</dbReference>
<dbReference type="GO" id="GO:0003677">
    <property type="term" value="F:DNA binding"/>
    <property type="evidence" value="ECO:0000314"/>
    <property type="project" value="UniProtKB"/>
</dbReference>
<dbReference type="GO" id="GO:0003700">
    <property type="term" value="F:DNA-binding transcription factor activity"/>
    <property type="evidence" value="ECO:0000314"/>
    <property type="project" value="BHF-UCL"/>
</dbReference>
<dbReference type="GO" id="GO:0000981">
    <property type="term" value="F:DNA-binding transcription factor activity, RNA polymerase II-specific"/>
    <property type="evidence" value="ECO:0000247"/>
    <property type="project" value="NTNU_SB"/>
</dbReference>
<dbReference type="GO" id="GO:0001227">
    <property type="term" value="F:DNA-binding transcription repressor activity, RNA polymerase II-specific"/>
    <property type="evidence" value="ECO:0000318"/>
    <property type="project" value="GO_Central"/>
</dbReference>
<dbReference type="GO" id="GO:0042802">
    <property type="term" value="F:identical protein binding"/>
    <property type="evidence" value="ECO:0000353"/>
    <property type="project" value="IntAct"/>
</dbReference>
<dbReference type="GO" id="GO:0042803">
    <property type="term" value="F:protein homodimerization activity"/>
    <property type="evidence" value="ECO:0000314"/>
    <property type="project" value="UniProtKB"/>
</dbReference>
<dbReference type="GO" id="GO:0000978">
    <property type="term" value="F:RNA polymerase II cis-regulatory region sequence-specific DNA binding"/>
    <property type="evidence" value="ECO:0000318"/>
    <property type="project" value="GO_Central"/>
</dbReference>
<dbReference type="GO" id="GO:0043565">
    <property type="term" value="F:sequence-specific DNA binding"/>
    <property type="evidence" value="ECO:0000314"/>
    <property type="project" value="BHF-UCL"/>
</dbReference>
<dbReference type="GO" id="GO:0001221">
    <property type="term" value="F:transcription coregulator binding"/>
    <property type="evidence" value="ECO:0007669"/>
    <property type="project" value="Ensembl"/>
</dbReference>
<dbReference type="GO" id="GO:0008270">
    <property type="term" value="F:zinc ion binding"/>
    <property type="evidence" value="ECO:0007669"/>
    <property type="project" value="UniProtKB-KW"/>
</dbReference>
<dbReference type="GO" id="GO:0043010">
    <property type="term" value="P:camera-type eye development"/>
    <property type="evidence" value="ECO:0007669"/>
    <property type="project" value="Ensembl"/>
</dbReference>
<dbReference type="GO" id="GO:0021757">
    <property type="term" value="P:caudate nucleus development"/>
    <property type="evidence" value="ECO:0000315"/>
    <property type="project" value="UniProtKB"/>
</dbReference>
<dbReference type="GO" id="GO:0021702">
    <property type="term" value="P:cerebellar Purkinje cell differentiation"/>
    <property type="evidence" value="ECO:0007669"/>
    <property type="project" value="Ensembl"/>
</dbReference>
<dbReference type="GO" id="GO:0021987">
    <property type="term" value="P:cerebral cortex development"/>
    <property type="evidence" value="ECO:0000270"/>
    <property type="project" value="BHF-UCL"/>
</dbReference>
<dbReference type="GO" id="GO:0060502">
    <property type="term" value="P:epithelial cell proliferation involved in lung morphogenesis"/>
    <property type="evidence" value="ECO:0007669"/>
    <property type="project" value="Ensembl"/>
</dbReference>
<dbReference type="GO" id="GO:0010467">
    <property type="term" value="P:gene expression"/>
    <property type="evidence" value="ECO:0007669"/>
    <property type="project" value="Ensembl"/>
</dbReference>
<dbReference type="GO" id="GO:0048286">
    <property type="term" value="P:lung alveolus development"/>
    <property type="evidence" value="ECO:0007669"/>
    <property type="project" value="Ensembl"/>
</dbReference>
<dbReference type="GO" id="GO:0045892">
    <property type="term" value="P:negative regulation of DNA-templated transcription"/>
    <property type="evidence" value="ECO:0000314"/>
    <property type="project" value="BHF-UCL"/>
</dbReference>
<dbReference type="GO" id="GO:0060501">
    <property type="term" value="P:positive regulation of epithelial cell proliferation involved in lung morphogenesis"/>
    <property type="evidence" value="ECO:0007669"/>
    <property type="project" value="Ensembl"/>
</dbReference>
<dbReference type="GO" id="GO:0002053">
    <property type="term" value="P:positive regulation of mesenchymal cell proliferation"/>
    <property type="evidence" value="ECO:0007669"/>
    <property type="project" value="Ensembl"/>
</dbReference>
<dbReference type="GO" id="GO:0009791">
    <property type="term" value="P:post-embryonic development"/>
    <property type="evidence" value="ECO:0007669"/>
    <property type="project" value="Ensembl"/>
</dbReference>
<dbReference type="GO" id="GO:0021758">
    <property type="term" value="P:putamen development"/>
    <property type="evidence" value="ECO:0000315"/>
    <property type="project" value="UniProtKB"/>
</dbReference>
<dbReference type="GO" id="GO:0006357">
    <property type="term" value="P:regulation of transcription by RNA polymerase II"/>
    <property type="evidence" value="ECO:0000318"/>
    <property type="project" value="GO_Central"/>
</dbReference>
<dbReference type="GO" id="GO:0060013">
    <property type="term" value="P:righting reflex"/>
    <property type="evidence" value="ECO:0007669"/>
    <property type="project" value="Ensembl"/>
</dbReference>
<dbReference type="GO" id="GO:0007519">
    <property type="term" value="P:skeletal muscle tissue development"/>
    <property type="evidence" value="ECO:0007669"/>
    <property type="project" value="Ensembl"/>
</dbReference>
<dbReference type="GO" id="GO:0048745">
    <property type="term" value="P:smooth muscle tissue development"/>
    <property type="evidence" value="ECO:0007669"/>
    <property type="project" value="Ensembl"/>
</dbReference>
<dbReference type="GO" id="GO:0042297">
    <property type="term" value="P:vocal learning"/>
    <property type="evidence" value="ECO:0007669"/>
    <property type="project" value="Ensembl"/>
</dbReference>
<dbReference type="GO" id="GO:0071625">
    <property type="term" value="P:vocalization behavior"/>
    <property type="evidence" value="ECO:0007669"/>
    <property type="project" value="Ensembl"/>
</dbReference>
<dbReference type="CDD" id="cd20065">
    <property type="entry name" value="FH_FOXP2"/>
    <property type="match status" value="1"/>
</dbReference>
<dbReference type="FunFam" id="1.20.5.340:FF:000005">
    <property type="entry name" value="Forkhead box P1, isoform CRA_f"/>
    <property type="match status" value="1"/>
</dbReference>
<dbReference type="FunFam" id="1.10.10.10:FF:000010">
    <property type="entry name" value="Forkhead box P2 isoform B"/>
    <property type="match status" value="1"/>
</dbReference>
<dbReference type="Gene3D" id="1.20.5.340">
    <property type="match status" value="1"/>
</dbReference>
<dbReference type="Gene3D" id="1.10.10.10">
    <property type="entry name" value="Winged helix-like DNA-binding domain superfamily/Winged helix DNA-binding domain"/>
    <property type="match status" value="1"/>
</dbReference>
<dbReference type="IDEAL" id="IID00429"/>
<dbReference type="InterPro" id="IPR047412">
    <property type="entry name" value="FH_FOXP1_P2"/>
</dbReference>
<dbReference type="InterPro" id="IPR001766">
    <property type="entry name" value="Fork_head_dom"/>
</dbReference>
<dbReference type="InterPro" id="IPR050998">
    <property type="entry name" value="FOXP"/>
</dbReference>
<dbReference type="InterPro" id="IPR032354">
    <property type="entry name" value="FOXP-CC"/>
</dbReference>
<dbReference type="InterPro" id="IPR030456">
    <property type="entry name" value="TF_fork_head_CS_2"/>
</dbReference>
<dbReference type="InterPro" id="IPR036388">
    <property type="entry name" value="WH-like_DNA-bd_sf"/>
</dbReference>
<dbReference type="InterPro" id="IPR036390">
    <property type="entry name" value="WH_DNA-bd_sf"/>
</dbReference>
<dbReference type="PANTHER" id="PTHR45796">
    <property type="entry name" value="FORKHEAD BOX P, ISOFORM C"/>
    <property type="match status" value="1"/>
</dbReference>
<dbReference type="PANTHER" id="PTHR45796:SF9">
    <property type="entry name" value="FORKHEAD BOX PROTEIN P2"/>
    <property type="match status" value="1"/>
</dbReference>
<dbReference type="Pfam" id="PF00250">
    <property type="entry name" value="Forkhead"/>
    <property type="match status" value="1"/>
</dbReference>
<dbReference type="Pfam" id="PF16159">
    <property type="entry name" value="FOXP-CC"/>
    <property type="match status" value="1"/>
</dbReference>
<dbReference type="PRINTS" id="PR00053">
    <property type="entry name" value="FORKHEAD"/>
</dbReference>
<dbReference type="SMART" id="SM00339">
    <property type="entry name" value="FH"/>
    <property type="match status" value="1"/>
</dbReference>
<dbReference type="SUPFAM" id="SSF46785">
    <property type="entry name" value="Winged helix' DNA-binding domain"/>
    <property type="match status" value="1"/>
</dbReference>
<dbReference type="PROSITE" id="PS00658">
    <property type="entry name" value="FORK_HEAD_2"/>
    <property type="match status" value="1"/>
</dbReference>
<dbReference type="PROSITE" id="PS50039">
    <property type="entry name" value="FORK_HEAD_3"/>
    <property type="match status" value="1"/>
</dbReference>
<dbReference type="PROSITE" id="PS00028">
    <property type="entry name" value="ZINC_FINGER_C2H2_1"/>
    <property type="match status" value="1"/>
</dbReference>
<keyword id="KW-0002">3D-structure</keyword>
<keyword id="KW-0025">Alternative splicing</keyword>
<keyword id="KW-0160">Chromosomal rearrangement</keyword>
<keyword id="KW-0225">Disease variant</keyword>
<keyword id="KW-0238">DNA-binding</keyword>
<keyword id="KW-0479">Metal-binding</keyword>
<keyword id="KW-0539">Nucleus</keyword>
<keyword id="KW-1267">Proteomics identification</keyword>
<keyword id="KW-1185">Reference proteome</keyword>
<keyword id="KW-0678">Repressor</keyword>
<keyword id="KW-0804">Transcription</keyword>
<keyword id="KW-0805">Transcription regulation</keyword>
<keyword id="KW-0862">Zinc</keyword>
<keyword id="KW-0863">Zinc-finger</keyword>
<organism>
    <name type="scientific">Homo sapiens</name>
    <name type="common">Human</name>
    <dbReference type="NCBI Taxonomy" id="9606"/>
    <lineage>
        <taxon>Eukaryota</taxon>
        <taxon>Metazoa</taxon>
        <taxon>Chordata</taxon>
        <taxon>Craniata</taxon>
        <taxon>Vertebrata</taxon>
        <taxon>Euteleostomi</taxon>
        <taxon>Mammalia</taxon>
        <taxon>Eutheria</taxon>
        <taxon>Euarchontoglires</taxon>
        <taxon>Primates</taxon>
        <taxon>Haplorrhini</taxon>
        <taxon>Catarrhini</taxon>
        <taxon>Hominidae</taxon>
        <taxon>Homo</taxon>
    </lineage>
</organism>
<evidence type="ECO:0000250" key="1"/>
<evidence type="ECO:0000250" key="2">
    <source>
        <dbReference type="UniProtKB" id="P58463"/>
    </source>
</evidence>
<evidence type="ECO:0000255" key="3">
    <source>
        <dbReference type="PROSITE-ProRule" id="PRU00089"/>
    </source>
</evidence>
<evidence type="ECO:0000256" key="4">
    <source>
        <dbReference type="SAM" id="MobiDB-lite"/>
    </source>
</evidence>
<evidence type="ECO:0000269" key="5">
    <source>
    </source>
</evidence>
<evidence type="ECO:0000269" key="6">
    <source>
    </source>
</evidence>
<evidence type="ECO:0000269" key="7">
    <source>
    </source>
</evidence>
<evidence type="ECO:0000269" key="8">
    <source>
    </source>
</evidence>
<evidence type="ECO:0000269" key="9">
    <source>
    </source>
</evidence>
<evidence type="ECO:0000269" key="10">
    <source>
    </source>
</evidence>
<evidence type="ECO:0000269" key="11">
    <source>
    </source>
</evidence>
<evidence type="ECO:0000303" key="12">
    <source>
    </source>
</evidence>
<evidence type="ECO:0000303" key="13">
    <source>
    </source>
</evidence>
<evidence type="ECO:0000303" key="14">
    <source>
    </source>
</evidence>
<evidence type="ECO:0000303" key="15">
    <source ref="3"/>
</evidence>
<evidence type="ECO:0000303" key="16">
    <source ref="4"/>
</evidence>
<evidence type="ECO:0000305" key="17"/>
<evidence type="ECO:0007829" key="18">
    <source>
        <dbReference type="PDB" id="2A07"/>
    </source>
</evidence>
<evidence type="ECO:0007829" key="19">
    <source>
        <dbReference type="PDB" id="2AS5"/>
    </source>
</evidence>
<accession>O15409</accession>
<accession>A0AUV6</accession>
<accession>A4D0U8</accession>
<accession>A6NNW4</accession>
<accession>B4DLD9</accession>
<accession>Q6ZND1</accession>
<accession>Q75MJ3</accession>
<accession>Q8IZE0</accession>
<accession>Q8N0W2</accession>
<accession>Q8N6B7</accession>
<accession>Q8N6B8</accession>
<accession>Q8NFQ1</accession>
<accession>Q8NFQ2</accession>
<accession>Q8NFQ3</accession>
<accession>Q8NFQ4</accession>
<accession>Q8TD74</accession>
<comment type="function">
    <text>Transcriptional repressor that may play a role in the specification and differentiation of lung epithelium. May also play a role in developing neural, gastrointestinal and cardiovascular tissues. Can act with CTBP1 to synergistically repress transcription but CTPBP1 is not essential. Plays a role in synapse formation by regulating SRPX2 levels. Involved in neural mechanisms mediating the development of speech and language.</text>
</comment>
<comment type="subunit">
    <text evidence="2 8 9 10 11">Forms homodimers and heterodimers with FOXP1 and FOXP4. Dimerization is required for DNA-binding. Interacts with CTBP1 (By similarity). Interacts with FOXP1 (PubMed:26647308). Isoform 1 and isoform 3 interact with TBR1 (PubMed:25232744, PubMed:30250039). Interacts with ZMYM2 (PubMed:32891193).</text>
</comment>
<comment type="interaction">
    <interactant intactId="EBI-983612">
        <id>O15409</id>
    </interactant>
    <interactant intactId="EBI-395261">
        <id>P24863</id>
        <label>CCNC</label>
    </interactant>
    <organismsDiffer>false</organismsDiffer>
    <experiments>3</experiments>
</comment>
<comment type="interaction">
    <interactant intactId="EBI-983612">
        <id>O15409</id>
    </interactant>
    <interactant intactId="EBI-1245761">
        <id>Q00526</id>
        <label>CDK3</label>
    </interactant>
    <organismsDiffer>false</organismsDiffer>
    <experiments>3</experiments>
</comment>
<comment type="interaction">
    <interactant intactId="EBI-983612">
        <id>O15409</id>
    </interactant>
    <interactant intactId="EBI-10171858">
        <id>Q13363-2</id>
        <label>CTBP1</label>
    </interactant>
    <organismsDiffer>false</organismsDiffer>
    <experiments>7</experiments>
</comment>
<comment type="interaction">
    <interactant intactId="EBI-983612">
        <id>O15409</id>
    </interactant>
    <interactant intactId="EBI-741533">
        <id>P56545</id>
        <label>CTBP2</label>
    </interactant>
    <organismsDiffer>false</organismsDiffer>
    <experiments>4</experiments>
</comment>
<comment type="interaction">
    <interactant intactId="EBI-983612">
        <id>O15409</id>
    </interactant>
    <interactant intactId="EBI-10171902">
        <id>P56545-3</id>
        <label>CTBP2</label>
    </interactant>
    <organismsDiffer>false</organismsDiffer>
    <experiments>3</experiments>
</comment>
<comment type="interaction">
    <interactant intactId="EBI-983612">
        <id>O15409</id>
    </interactant>
    <interactant intactId="EBI-744506">
        <id>Q86V42</id>
        <label>FAM124A</label>
    </interactant>
    <organismsDiffer>false</organismsDiffer>
    <experiments>3</experiments>
</comment>
<comment type="interaction">
    <interactant intactId="EBI-983612">
        <id>O15409</id>
    </interactant>
    <interactant intactId="EBI-983809">
        <id>Q9H334</id>
        <label>FOXP1</label>
    </interactant>
    <organismsDiffer>false</organismsDiffer>
    <experiments>16</experiments>
</comment>
<comment type="interaction">
    <interactant intactId="EBI-983612">
        <id>O15409</id>
    </interactant>
    <interactant intactId="EBI-983612">
        <id>O15409</id>
        <label>FOXP2</label>
    </interactant>
    <organismsDiffer>false</organismsDiffer>
    <experiments>4</experiments>
</comment>
<comment type="interaction">
    <interactant intactId="EBI-983612">
        <id>O15409</id>
    </interactant>
    <interactant intactId="EBI-1054619">
        <id>Q8IVH2</id>
        <label>FOXP4</label>
    </interactant>
    <organismsDiffer>false</organismsDiffer>
    <experiments>9</experiments>
</comment>
<comment type="interaction">
    <interactant intactId="EBI-983612">
        <id>O15409</id>
    </interactant>
    <interactant intactId="EBI-739832">
        <id>Q8TBB1</id>
        <label>LNX1</label>
    </interactant>
    <organismsDiffer>false</organismsDiffer>
    <experiments>3</experiments>
</comment>
<comment type="interaction">
    <interactant intactId="EBI-983612">
        <id>O15409</id>
    </interactant>
    <interactant intactId="EBI-714158">
        <id>Q13526</id>
        <label>PIN1</label>
    </interactant>
    <organismsDiffer>false</organismsDiffer>
    <experiments>6</experiments>
</comment>
<comment type="interaction">
    <interactant intactId="EBI-983612">
        <id>O15409</id>
    </interactant>
    <interactant intactId="EBI-727004">
        <id>O00560</id>
        <label>SDCBP</label>
    </interactant>
    <organismsDiffer>false</organismsDiffer>
    <experiments>3</experiments>
</comment>
<comment type="interaction">
    <interactant intactId="EBI-983612">
        <id>O15409</id>
    </interactant>
    <interactant intactId="EBI-717810">
        <id>Q08117</id>
        <label>TLE5</label>
    </interactant>
    <organismsDiffer>false</organismsDiffer>
    <experiments>3</experiments>
</comment>
<comment type="interaction">
    <interactant intactId="EBI-983612">
        <id>O15409</id>
    </interactant>
    <interactant intactId="EBI-11741437">
        <id>Q08117-2</id>
        <label>TLE5</label>
    </interactant>
    <organismsDiffer>false</organismsDiffer>
    <experiments>3</experiments>
</comment>
<comment type="interaction">
    <interactant intactId="EBI-983612">
        <id>O15409</id>
    </interactant>
    <interactant intactId="EBI-740411">
        <id>Q96A04</id>
        <label>TSACC</label>
    </interactant>
    <organismsDiffer>false</organismsDiffer>
    <experiments>6</experiments>
</comment>
<comment type="subcellular location">
    <subcellularLocation>
        <location evidence="17">Nucleus</location>
    </subcellularLocation>
</comment>
<comment type="alternative products">
    <event type="alternative splicing"/>
    <isoform>
        <id>O15409-1</id>
        <name>1</name>
        <name>I</name>
        <sequence type="displayed"/>
    </isoform>
    <isoform>
        <id>O15409-3</id>
        <name>2</name>
        <name>II</name>
        <sequence type="not described"/>
    </isoform>
    <isoform>
        <id>O15409-2</id>
        <name>3</name>
        <name>III</name>
        <name>IV</name>
        <sequence type="described" ref="VSP_001558"/>
    </isoform>
    <isoform>
        <id>O15409-4</id>
        <name>4</name>
        <sequence type="described" ref="VSP_011532"/>
    </isoform>
    <isoform>
        <id>O15409-5</id>
        <name>5</name>
        <sequence type="described" ref="VSP_011532 VSP_011535 VSP_011536"/>
    </isoform>
    <isoform>
        <id>O15409-6</id>
        <name>6</name>
        <name>FOXP2-S</name>
        <sequence type="described" ref="VSP_011538 VSP_011539"/>
    </isoform>
    <isoform>
        <id>O15409-7</id>
        <name>7</name>
        <sequence type="described" ref="VSP_011537"/>
    </isoform>
    <isoform>
        <id>O15409-8</id>
        <name>8</name>
        <sequence type="described" ref="VSP_011533 VSP_011534"/>
    </isoform>
    <isoform>
        <id>O15409-9</id>
        <name>9</name>
        <sequence type="described" ref="VSP_043464"/>
    </isoform>
</comment>
<comment type="tissue specificity">
    <text evidence="6">Isoform 1 and isoform 6 are expressed in adult and fetal brain, caudate nucleus and lung.</text>
</comment>
<comment type="developmental stage">
    <text evidence="7">Expressed in the brain at 15 and 22 weeks of gestation, with a pattern of strong cortical, basal ganglia, thalamic and cerebellar expression. Highly expressed in the head and tail of nucleus caudatus and putamen. Restricted expression within the globus pallidus, with high levels in the pars interna, which provides the principal source of output from the basal ganglia to the nucleus centrum medianum thalami (CM) and the major motor relay nuclei of the thalamus. In the thalamus, present in the CM and nucleus medialis dorsalis thalami. Lower levels are observed in the nuclei anterior thalami, dorsal and ventral, and the nucleus parafascicularis thalami. Expressed in the ventrobasal complex comprising the nucleus ventralis posterior lateralis/medialis. The ventral tier of the thalamus exhibits strong expression, including nuclei ventralis anterior, lateralis and posterior lateralis pars oralis. Also expressed in the nucleus subthalamicus bilaterally and in the nucleus ruber.</text>
</comment>
<comment type="domain">
    <text evidence="1">The leucine-zipper is required for dimerization and transcriptional repression.</text>
</comment>
<comment type="disease" evidence="5 8">
    <disease id="DI-02320">
        <name>Speech-language disorder 1</name>
        <acronym>SPCH1</acronym>
        <description>A disorder characterized by severe orofacial dyspraxia resulting in largely incomprehensible speech. Affected individuals have severe impairment in the selection and sequencing of fine orofacial movements which are necessary for articulation, and deficits in several facets of grammatical skills and language processing, such as the ability to break up words into their constituent phonemes.</description>
        <dbReference type="MIM" id="602081"/>
    </disease>
    <text>The disease is caused by variants affecting the gene represented in this entry.</text>
</comment>
<comment type="disease">
    <text>A chromosomal aberration involving FOXP2 is a cause of severe speech and language impairment. Translocation t(5;7)(q22;q31.2).</text>
</comment>
<comment type="online information" name="Protein Spotlight">
    <link uri="https://www.proteinspotlight.org/back_issues/051"/>
    <text>Talking heads - Issue 51 of October 2004</text>
</comment>
<comment type="online information" name="Wikipedia">
    <link uri="https://en.wikipedia.org/wiki/FOXP2"/>
    <text>FOXP2 entry</text>
</comment>